<organism>
    <name type="scientific">Xanthomonas oryzae pv. oryzae (strain KACC10331 / KXO85)</name>
    <dbReference type="NCBI Taxonomy" id="291331"/>
    <lineage>
        <taxon>Bacteria</taxon>
        <taxon>Pseudomonadati</taxon>
        <taxon>Pseudomonadota</taxon>
        <taxon>Gammaproteobacteria</taxon>
        <taxon>Lysobacterales</taxon>
        <taxon>Lysobacteraceae</taxon>
        <taxon>Xanthomonas</taxon>
    </lineage>
</organism>
<accession>Q5H3R4</accession>
<protein>
    <recommendedName>
        <fullName evidence="1">Large ribosomal subunit protein bL31B</fullName>
    </recommendedName>
    <alternativeName>
        <fullName evidence="2">50S ribosomal protein L31 type B</fullName>
    </alternativeName>
</protein>
<sequence length="80" mass="9364">MKDNVHPNYKDVVFHDVTSDFKILTRSTMTSKETVKWEDGQEYPLIKVEISSSSHPFYTGKHKVIDTGGRIDKFQKRYAR</sequence>
<comment type="subunit">
    <text evidence="1">Part of the 50S ribosomal subunit.</text>
</comment>
<comment type="similarity">
    <text evidence="1">Belongs to the bacterial ribosomal protein bL31 family. Type B subfamily.</text>
</comment>
<comment type="sequence caution" evidence="2">
    <conflict type="erroneous initiation">
        <sequence resource="EMBL-CDS" id="AAW74407"/>
    </conflict>
</comment>
<feature type="chain" id="PRO_0000173286" description="Large ribosomal subunit protein bL31B">
    <location>
        <begin position="1"/>
        <end position="80"/>
    </location>
</feature>
<gene>
    <name evidence="1" type="primary">rpmE2</name>
    <name type="synonym">rpmE</name>
    <name type="ordered locus">XOO1153</name>
</gene>
<reference key="1">
    <citation type="journal article" date="2005" name="Nucleic Acids Res.">
        <title>The genome sequence of Xanthomonas oryzae pathovar oryzae KACC10331, the bacterial blight pathogen of rice.</title>
        <authorList>
            <person name="Lee B.-M."/>
            <person name="Park Y.-J."/>
            <person name="Park D.-S."/>
            <person name="Kang H.-W."/>
            <person name="Kim J.-G."/>
            <person name="Song E.-S."/>
            <person name="Park I.-C."/>
            <person name="Yoon U.-H."/>
            <person name="Hahn J.-H."/>
            <person name="Koo B.-S."/>
            <person name="Lee G.-B."/>
            <person name="Kim H."/>
            <person name="Park H.-S."/>
            <person name="Yoon K.-O."/>
            <person name="Kim J.-H."/>
            <person name="Jung C.-H."/>
            <person name="Koh N.-H."/>
            <person name="Seo J.-S."/>
            <person name="Go S.-J."/>
        </authorList>
    </citation>
    <scope>NUCLEOTIDE SEQUENCE [LARGE SCALE GENOMIC DNA]</scope>
    <source>
        <strain>KACC10331 / KXO85</strain>
    </source>
</reference>
<dbReference type="EMBL" id="AE013598">
    <property type="protein sequence ID" value="AAW74407.1"/>
    <property type="status" value="ALT_INIT"/>
    <property type="molecule type" value="Genomic_DNA"/>
</dbReference>
<dbReference type="SMR" id="Q5H3R4"/>
<dbReference type="STRING" id="291331.XOO1153"/>
<dbReference type="KEGG" id="xoo:XOO1153"/>
<dbReference type="HOGENOM" id="CLU_114306_2_2_6"/>
<dbReference type="Proteomes" id="UP000006735">
    <property type="component" value="Chromosome"/>
</dbReference>
<dbReference type="GO" id="GO:1990904">
    <property type="term" value="C:ribonucleoprotein complex"/>
    <property type="evidence" value="ECO:0007669"/>
    <property type="project" value="UniProtKB-KW"/>
</dbReference>
<dbReference type="GO" id="GO:0005840">
    <property type="term" value="C:ribosome"/>
    <property type="evidence" value="ECO:0007669"/>
    <property type="project" value="UniProtKB-KW"/>
</dbReference>
<dbReference type="GO" id="GO:0003735">
    <property type="term" value="F:structural constituent of ribosome"/>
    <property type="evidence" value="ECO:0007669"/>
    <property type="project" value="InterPro"/>
</dbReference>
<dbReference type="GO" id="GO:0006412">
    <property type="term" value="P:translation"/>
    <property type="evidence" value="ECO:0007669"/>
    <property type="project" value="UniProtKB-UniRule"/>
</dbReference>
<dbReference type="Gene3D" id="4.10.830.30">
    <property type="entry name" value="Ribosomal protein L31"/>
    <property type="match status" value="1"/>
</dbReference>
<dbReference type="HAMAP" id="MF_00502">
    <property type="entry name" value="Ribosomal_bL31_2"/>
    <property type="match status" value="1"/>
</dbReference>
<dbReference type="InterPro" id="IPR034704">
    <property type="entry name" value="Ribosomal_bL28/bL31-like_sf"/>
</dbReference>
<dbReference type="InterPro" id="IPR002150">
    <property type="entry name" value="Ribosomal_bL31"/>
</dbReference>
<dbReference type="InterPro" id="IPR027493">
    <property type="entry name" value="Ribosomal_bL31_B"/>
</dbReference>
<dbReference type="InterPro" id="IPR042105">
    <property type="entry name" value="Ribosomal_bL31_sf"/>
</dbReference>
<dbReference type="NCBIfam" id="TIGR00105">
    <property type="entry name" value="L31"/>
    <property type="match status" value="1"/>
</dbReference>
<dbReference type="NCBIfam" id="NF002462">
    <property type="entry name" value="PRK01678.1"/>
    <property type="match status" value="1"/>
</dbReference>
<dbReference type="PANTHER" id="PTHR33280">
    <property type="entry name" value="50S RIBOSOMAL PROTEIN L31, CHLOROPLASTIC"/>
    <property type="match status" value="1"/>
</dbReference>
<dbReference type="PANTHER" id="PTHR33280:SF6">
    <property type="entry name" value="LARGE RIBOSOMAL SUBUNIT PROTEIN BL31A"/>
    <property type="match status" value="1"/>
</dbReference>
<dbReference type="Pfam" id="PF01197">
    <property type="entry name" value="Ribosomal_L31"/>
    <property type="match status" value="1"/>
</dbReference>
<dbReference type="PRINTS" id="PR01249">
    <property type="entry name" value="RIBOSOMALL31"/>
</dbReference>
<dbReference type="SUPFAM" id="SSF143800">
    <property type="entry name" value="L28p-like"/>
    <property type="match status" value="1"/>
</dbReference>
<dbReference type="PROSITE" id="PS01143">
    <property type="entry name" value="RIBOSOMAL_L31"/>
    <property type="match status" value="1"/>
</dbReference>
<keyword id="KW-1185">Reference proteome</keyword>
<keyword id="KW-0687">Ribonucleoprotein</keyword>
<keyword id="KW-0689">Ribosomal protein</keyword>
<proteinExistence type="inferred from homology"/>
<name>RL31B_XANOR</name>
<evidence type="ECO:0000255" key="1">
    <source>
        <dbReference type="HAMAP-Rule" id="MF_00502"/>
    </source>
</evidence>
<evidence type="ECO:0000305" key="2"/>